<gene>
    <name evidence="2" type="primary">rpmA</name>
    <name type="ordered locus">CKL_0881</name>
</gene>
<evidence type="ECO:0000250" key="1">
    <source>
        <dbReference type="UniProtKB" id="Q2FXT0"/>
    </source>
</evidence>
<evidence type="ECO:0000255" key="2">
    <source>
        <dbReference type="HAMAP-Rule" id="MF_00539"/>
    </source>
</evidence>
<evidence type="ECO:0000256" key="3">
    <source>
        <dbReference type="SAM" id="MobiDB-lite"/>
    </source>
</evidence>
<evidence type="ECO:0000305" key="4"/>
<comment type="PTM">
    <text evidence="1">The N-terminus is cleaved by ribosomal processing cysteine protease Prp.</text>
</comment>
<comment type="similarity">
    <text evidence="2">Belongs to the bacterial ribosomal protein bL27 family.</text>
</comment>
<protein>
    <recommendedName>
        <fullName evidence="2">Large ribosomal subunit protein bL27</fullName>
    </recommendedName>
    <alternativeName>
        <fullName evidence="4">50S ribosomal protein L27</fullName>
    </alternativeName>
</protein>
<dbReference type="EMBL" id="CP000673">
    <property type="protein sequence ID" value="EDK32932.1"/>
    <property type="molecule type" value="Genomic_DNA"/>
</dbReference>
<dbReference type="RefSeq" id="WP_012101259.1">
    <property type="nucleotide sequence ID" value="NC_009706.1"/>
</dbReference>
<dbReference type="SMR" id="A5N6K1"/>
<dbReference type="STRING" id="431943.CKL_0881"/>
<dbReference type="KEGG" id="ckl:CKL_0881"/>
<dbReference type="eggNOG" id="COG0211">
    <property type="taxonomic scope" value="Bacteria"/>
</dbReference>
<dbReference type="HOGENOM" id="CLU_095424_4_0_9"/>
<dbReference type="Proteomes" id="UP000002411">
    <property type="component" value="Chromosome"/>
</dbReference>
<dbReference type="GO" id="GO:0022625">
    <property type="term" value="C:cytosolic large ribosomal subunit"/>
    <property type="evidence" value="ECO:0007669"/>
    <property type="project" value="TreeGrafter"/>
</dbReference>
<dbReference type="GO" id="GO:0003735">
    <property type="term" value="F:structural constituent of ribosome"/>
    <property type="evidence" value="ECO:0007669"/>
    <property type="project" value="InterPro"/>
</dbReference>
<dbReference type="GO" id="GO:0006412">
    <property type="term" value="P:translation"/>
    <property type="evidence" value="ECO:0007669"/>
    <property type="project" value="UniProtKB-UniRule"/>
</dbReference>
<dbReference type="FunFam" id="2.40.50.100:FF:000004">
    <property type="entry name" value="50S ribosomal protein L27"/>
    <property type="match status" value="1"/>
</dbReference>
<dbReference type="Gene3D" id="2.40.50.100">
    <property type="match status" value="1"/>
</dbReference>
<dbReference type="HAMAP" id="MF_00539">
    <property type="entry name" value="Ribosomal_bL27"/>
    <property type="match status" value="1"/>
</dbReference>
<dbReference type="InterPro" id="IPR001684">
    <property type="entry name" value="Ribosomal_bL27"/>
</dbReference>
<dbReference type="InterPro" id="IPR018261">
    <property type="entry name" value="Ribosomal_bL27_CS"/>
</dbReference>
<dbReference type="NCBIfam" id="TIGR00062">
    <property type="entry name" value="L27"/>
    <property type="match status" value="1"/>
</dbReference>
<dbReference type="PANTHER" id="PTHR15893:SF0">
    <property type="entry name" value="LARGE RIBOSOMAL SUBUNIT PROTEIN BL27M"/>
    <property type="match status" value="1"/>
</dbReference>
<dbReference type="PANTHER" id="PTHR15893">
    <property type="entry name" value="RIBOSOMAL PROTEIN L27"/>
    <property type="match status" value="1"/>
</dbReference>
<dbReference type="Pfam" id="PF01016">
    <property type="entry name" value="Ribosomal_L27"/>
    <property type="match status" value="1"/>
</dbReference>
<dbReference type="PRINTS" id="PR00063">
    <property type="entry name" value="RIBOSOMALL27"/>
</dbReference>
<dbReference type="SUPFAM" id="SSF110324">
    <property type="entry name" value="Ribosomal L27 protein-like"/>
    <property type="match status" value="1"/>
</dbReference>
<dbReference type="PROSITE" id="PS00831">
    <property type="entry name" value="RIBOSOMAL_L27"/>
    <property type="match status" value="1"/>
</dbReference>
<accession>A5N6K1</accession>
<keyword id="KW-1185">Reference proteome</keyword>
<keyword id="KW-0687">Ribonucleoprotein</keyword>
<keyword id="KW-0689">Ribosomal protein</keyword>
<reference key="1">
    <citation type="journal article" date="2008" name="Proc. Natl. Acad. Sci. U.S.A.">
        <title>The genome of Clostridium kluyveri, a strict anaerobe with unique metabolic features.</title>
        <authorList>
            <person name="Seedorf H."/>
            <person name="Fricke W.F."/>
            <person name="Veith B."/>
            <person name="Brueggemann H."/>
            <person name="Liesegang H."/>
            <person name="Strittmatter A."/>
            <person name="Miethke M."/>
            <person name="Buckel W."/>
            <person name="Hinderberger J."/>
            <person name="Li F."/>
            <person name="Hagemeier C."/>
            <person name="Thauer R.K."/>
            <person name="Gottschalk G."/>
        </authorList>
    </citation>
    <scope>NUCLEOTIDE SEQUENCE [LARGE SCALE GENOMIC DNA]</scope>
    <source>
        <strain>ATCC 8527 / DSM 555 / NBRC 12016 / NCIMB 10680 / K1</strain>
    </source>
</reference>
<organism>
    <name type="scientific">Clostridium kluyveri (strain ATCC 8527 / DSM 555 / NBRC 12016 / NCIMB 10680 / K1)</name>
    <dbReference type="NCBI Taxonomy" id="431943"/>
    <lineage>
        <taxon>Bacteria</taxon>
        <taxon>Bacillati</taxon>
        <taxon>Bacillota</taxon>
        <taxon>Clostridia</taxon>
        <taxon>Eubacteriales</taxon>
        <taxon>Clostridiaceae</taxon>
        <taxon>Clostridium</taxon>
    </lineage>
</organism>
<proteinExistence type="inferred from homology"/>
<name>RL27_CLOK5</name>
<sequence>MIIMNLQIFAHKKGMGSSKNGRDSESKRLGTKSADGQFVLAGNILVRQRGTKIHPGKNVGRGSDDTLFSKIDGIVRYERFGKTKKKASVYPLEVEELVAE</sequence>
<feature type="propeptide" id="PRO_0000459882" evidence="1">
    <location>
        <begin position="1"/>
        <end position="9"/>
    </location>
</feature>
<feature type="chain" id="PRO_1000081882" description="Large ribosomal subunit protein bL27">
    <location>
        <begin position="10"/>
        <end position="100"/>
    </location>
</feature>
<feature type="region of interest" description="Disordered" evidence="3">
    <location>
        <begin position="13"/>
        <end position="32"/>
    </location>
</feature>